<organism>
    <name type="scientific">Brucella abortus (strain 2308)</name>
    <dbReference type="NCBI Taxonomy" id="359391"/>
    <lineage>
        <taxon>Bacteria</taxon>
        <taxon>Pseudomonadati</taxon>
        <taxon>Pseudomonadota</taxon>
        <taxon>Alphaproteobacteria</taxon>
        <taxon>Hyphomicrobiales</taxon>
        <taxon>Brucellaceae</taxon>
        <taxon>Brucella/Ochrobactrum group</taxon>
        <taxon>Brucella</taxon>
    </lineage>
</organism>
<name>BHUA_BRUA2</name>
<comment type="function">
    <text evidence="3">Heme transporter playing an important role in stationary-phase iron acquisition and required for maintenance of chronic infection in mice.</text>
</comment>
<comment type="subcellular location">
    <subcellularLocation>
        <location evidence="2">Cell outer membrane</location>
        <topology evidence="2">Multi-pass membrane protein</topology>
    </subcellularLocation>
</comment>
<comment type="induction">
    <text>Induced in absence of iron. Maximally expressed during stationary phase when cultivated in low-iron minimal medium.</text>
</comment>
<comment type="disruption phenotype">
    <text evidence="3">The mutant is unable to use hemin as an iron source but retains the ability to use ferric chloride and the siderophore 2,3-DHBA. Exhibits an accelerated loss of viability after 144 hours of culture in low-iron minimal medium. Exhibits significant attenuation in murine macrophages and is unable to maintain a chronic spleen infection in mice.</text>
</comment>
<comment type="similarity">
    <text evidence="4">Belongs to the TonB-dependent receptor family.</text>
</comment>
<reference key="1">
    <citation type="journal article" date="2005" name="Infect. Immun.">
        <title>Whole-genome analyses of speciation events in pathogenic Brucellae.</title>
        <authorList>
            <person name="Chain P.S."/>
            <person name="Comerci D.J."/>
            <person name="Tolmasky M.E."/>
            <person name="Larimer F.W."/>
            <person name="Malfatti S.A."/>
            <person name="Vergez L.M."/>
            <person name="Aguero F."/>
            <person name="Land M.L."/>
            <person name="Ugalde R.A."/>
            <person name="Garcia E."/>
        </authorList>
    </citation>
    <scope>NUCLEOTIDE SEQUENCE [LARGE SCALE GENOMIC DNA]</scope>
    <source>
        <strain>2308</strain>
    </source>
</reference>
<reference key="2">
    <citation type="journal article" date="2007" name="Infect. Immun.">
        <title>Brucella abortus requires the heme transporter BhuA for maintenance of chronic infection in BALB/c mice.</title>
        <authorList>
            <person name="Paulley J.T."/>
            <person name="Anderson E.S."/>
            <person name="Roop R.M. II"/>
        </authorList>
    </citation>
    <scope>FUNCTION IN HEME TRANSPORT</scope>
    <scope>DISRUPTION PHENOTYPE</scope>
</reference>
<gene>
    <name type="primary">bhuA</name>
    <name type="ordered locus">BAB2_1150</name>
</gene>
<sequence length="661" mass="72931">MKFTRTLVLVSTSLLATVATSQAQEVKRDTKKQGEVVLKPITIISHGKDNIEATGGTVLTYKDIEKLQPANVSELFSRQSSIAVSGGGGPSKRIHVLGMEQSNLAVSVDGVPQTATSWHHTGSNVIDPAFLKRVEVEAGAAAADSGFGAAAGAIRYETVNALDLLEPGKTFGARIIGSYGTNGRGFSGSTAAYGLKDGFDWLLMLHGTSGHNYKNGDGTEILGTEPAARNILGKAGYEFDGNRIDIGYERSRDKADRLIKMNMGLPGDTEYPLEVARDSVNIKYTRTDATDMWDPEVQFYYNRNDYWRNDYQNRTNGNMILKEDLYGGKLQNTFTIDYGKITAGIDFGKHDYNTDNYGHNDRRYRKFNTQQVGAFTQGRFEFDNGFSLSTGARYDYSRFADWNDEVFSDSGASVNGTLSYKFNEHIEVFAGASRTWLGYVLGDYGYVHARNNAFYTDPTFSPGRARNYKAGVNFGGADWSAGITLFDTRIAGLPNYDSQKLGNDPEEYRSRGFTLNARYIWNYTTIGATFTKAKVTAGDDPVLPNSGSFMPIGDMATLFIDQEIPDYNMKVGATLAWAGRISDEAATAANFYDQPAYTVVNAYAEWNPPAVKNMTLRVGVENLFNENYYERTSFAPSQNRGGIDAVWAPGRTFTFQTAFKF</sequence>
<accession>Q2YJB2</accession>
<protein>
    <recommendedName>
        <fullName>Heme transporter BhuA</fullName>
    </recommendedName>
    <alternativeName>
        <fullName>Brucella heme uptake protein A</fullName>
    </alternativeName>
</protein>
<keyword id="KW-0998">Cell outer membrane</keyword>
<keyword id="KW-0472">Membrane</keyword>
<keyword id="KW-0675">Receptor</keyword>
<keyword id="KW-1185">Reference proteome</keyword>
<keyword id="KW-0732">Signal</keyword>
<keyword id="KW-0798">TonB box</keyword>
<keyword id="KW-0812">Transmembrane</keyword>
<keyword id="KW-1134">Transmembrane beta strand</keyword>
<keyword id="KW-0813">Transport</keyword>
<dbReference type="EMBL" id="AM040265">
    <property type="protein sequence ID" value="CAJ13316.1"/>
    <property type="molecule type" value="Genomic_DNA"/>
</dbReference>
<dbReference type="RefSeq" id="WP_006099340.1">
    <property type="nucleotide sequence ID" value="NZ_KN046823.1"/>
</dbReference>
<dbReference type="SMR" id="Q2YJB2"/>
<dbReference type="STRING" id="359391.BAB2_1150"/>
<dbReference type="TCDB" id="1.B.14.2.10">
    <property type="family name" value="the outer membrane receptor (omr) family"/>
</dbReference>
<dbReference type="KEGG" id="bmf:BAB2_1150"/>
<dbReference type="PATRIC" id="fig|359391.11.peg.1936"/>
<dbReference type="HOGENOM" id="CLU_008287_19_4_5"/>
<dbReference type="PhylomeDB" id="Q2YJB2"/>
<dbReference type="Proteomes" id="UP000002719">
    <property type="component" value="Chromosome II"/>
</dbReference>
<dbReference type="GO" id="GO:0009279">
    <property type="term" value="C:cell outer membrane"/>
    <property type="evidence" value="ECO:0007669"/>
    <property type="project" value="UniProtKB-SubCell"/>
</dbReference>
<dbReference type="GO" id="GO:0015344">
    <property type="term" value="F:siderophore uptake transmembrane transporter activity"/>
    <property type="evidence" value="ECO:0007669"/>
    <property type="project" value="TreeGrafter"/>
</dbReference>
<dbReference type="CDD" id="cd01347">
    <property type="entry name" value="ligand_gated_channel"/>
    <property type="match status" value="1"/>
</dbReference>
<dbReference type="Gene3D" id="2.40.170.20">
    <property type="entry name" value="TonB-dependent receptor, beta-barrel domain"/>
    <property type="match status" value="1"/>
</dbReference>
<dbReference type="Gene3D" id="2.170.130.10">
    <property type="entry name" value="TonB-dependent receptor, plug domain"/>
    <property type="match status" value="1"/>
</dbReference>
<dbReference type="InterPro" id="IPR012910">
    <property type="entry name" value="Plug_dom"/>
</dbReference>
<dbReference type="InterPro" id="IPR037066">
    <property type="entry name" value="Plug_dom_sf"/>
</dbReference>
<dbReference type="InterPro" id="IPR039426">
    <property type="entry name" value="TonB-dep_rcpt-like"/>
</dbReference>
<dbReference type="InterPro" id="IPR000531">
    <property type="entry name" value="TonB-dep_rcpt_b-brl"/>
</dbReference>
<dbReference type="InterPro" id="IPR036942">
    <property type="entry name" value="TonB_rcpt_b-brl_sf"/>
</dbReference>
<dbReference type="PANTHER" id="PTHR30069:SF41">
    <property type="entry name" value="HEME_HEMOPEXIN UTILIZATION PROTEIN C"/>
    <property type="match status" value="1"/>
</dbReference>
<dbReference type="PANTHER" id="PTHR30069">
    <property type="entry name" value="TONB-DEPENDENT OUTER MEMBRANE RECEPTOR"/>
    <property type="match status" value="1"/>
</dbReference>
<dbReference type="Pfam" id="PF07715">
    <property type="entry name" value="Plug"/>
    <property type="match status" value="1"/>
</dbReference>
<dbReference type="Pfam" id="PF00593">
    <property type="entry name" value="TonB_dep_Rec_b-barrel"/>
    <property type="match status" value="1"/>
</dbReference>
<dbReference type="SUPFAM" id="SSF56935">
    <property type="entry name" value="Porins"/>
    <property type="match status" value="1"/>
</dbReference>
<dbReference type="PROSITE" id="PS52016">
    <property type="entry name" value="TONB_DEPENDENT_REC_3"/>
    <property type="match status" value="1"/>
</dbReference>
<proteinExistence type="evidence at protein level"/>
<feature type="signal peptide" evidence="1">
    <location>
        <begin position="1"/>
        <end position="23"/>
    </location>
</feature>
<feature type="chain" id="PRO_0000325857" description="Heme transporter BhuA">
    <location>
        <begin position="24"/>
        <end position="661"/>
    </location>
</feature>
<feature type="domain" description="TBDR plug" evidence="2">
    <location>
        <begin position="48"/>
        <end position="159"/>
    </location>
</feature>
<feature type="domain" description="TBDR beta-barrel" evidence="2">
    <location>
        <begin position="170"/>
        <end position="661"/>
    </location>
</feature>
<evidence type="ECO:0000255" key="1"/>
<evidence type="ECO:0000255" key="2">
    <source>
        <dbReference type="PROSITE-ProRule" id="PRU01360"/>
    </source>
</evidence>
<evidence type="ECO:0000269" key="3">
    <source>
    </source>
</evidence>
<evidence type="ECO:0000305" key="4"/>